<feature type="chain" id="PRO_1000196754" description="Bifunctional protein FolD">
    <location>
        <begin position="1"/>
        <end position="282"/>
    </location>
</feature>
<feature type="binding site" evidence="1">
    <location>
        <begin position="165"/>
        <end position="167"/>
    </location>
    <ligand>
        <name>NADP(+)</name>
        <dbReference type="ChEBI" id="CHEBI:58349"/>
    </ligand>
</feature>
<feature type="binding site" evidence="1">
    <location>
        <position position="190"/>
    </location>
    <ligand>
        <name>NADP(+)</name>
        <dbReference type="ChEBI" id="CHEBI:58349"/>
    </ligand>
</feature>
<feature type="binding site" evidence="1">
    <location>
        <position position="231"/>
    </location>
    <ligand>
        <name>NADP(+)</name>
        <dbReference type="ChEBI" id="CHEBI:58349"/>
    </ligand>
</feature>
<name>FOLD_CLOBB</name>
<protein>
    <recommendedName>
        <fullName evidence="1">Bifunctional protein FolD</fullName>
    </recommendedName>
    <domain>
        <recommendedName>
            <fullName evidence="1">Methylenetetrahydrofolate dehydrogenase</fullName>
            <ecNumber evidence="1">1.5.1.5</ecNumber>
        </recommendedName>
    </domain>
    <domain>
        <recommendedName>
            <fullName evidence="1">Methenyltetrahydrofolate cyclohydrolase</fullName>
            <ecNumber evidence="1">3.5.4.9</ecNumber>
        </recommendedName>
    </domain>
</protein>
<keyword id="KW-0028">Amino-acid biosynthesis</keyword>
<keyword id="KW-0368">Histidine biosynthesis</keyword>
<keyword id="KW-0378">Hydrolase</keyword>
<keyword id="KW-0486">Methionine biosynthesis</keyword>
<keyword id="KW-0511">Multifunctional enzyme</keyword>
<keyword id="KW-0521">NADP</keyword>
<keyword id="KW-0554">One-carbon metabolism</keyword>
<keyword id="KW-0560">Oxidoreductase</keyword>
<keyword id="KW-0658">Purine biosynthesis</keyword>
<dbReference type="EC" id="1.5.1.5" evidence="1"/>
<dbReference type="EC" id="3.5.4.9" evidence="1"/>
<dbReference type="EMBL" id="CP001056">
    <property type="protein sequence ID" value="ACD25120.1"/>
    <property type="molecule type" value="Genomic_DNA"/>
</dbReference>
<dbReference type="SMR" id="B2TRN5"/>
<dbReference type="KEGG" id="cbk:CLL_A2405"/>
<dbReference type="PATRIC" id="fig|935198.13.peg.2363"/>
<dbReference type="HOGENOM" id="CLU_034045_2_1_9"/>
<dbReference type="UniPathway" id="UPA00193"/>
<dbReference type="Proteomes" id="UP000001195">
    <property type="component" value="Chromosome"/>
</dbReference>
<dbReference type="GO" id="GO:0005829">
    <property type="term" value="C:cytosol"/>
    <property type="evidence" value="ECO:0007669"/>
    <property type="project" value="TreeGrafter"/>
</dbReference>
<dbReference type="GO" id="GO:0004477">
    <property type="term" value="F:methenyltetrahydrofolate cyclohydrolase activity"/>
    <property type="evidence" value="ECO:0007669"/>
    <property type="project" value="UniProtKB-UniRule"/>
</dbReference>
<dbReference type="GO" id="GO:0004488">
    <property type="term" value="F:methylenetetrahydrofolate dehydrogenase (NADP+) activity"/>
    <property type="evidence" value="ECO:0007669"/>
    <property type="project" value="UniProtKB-UniRule"/>
</dbReference>
<dbReference type="GO" id="GO:0000105">
    <property type="term" value="P:L-histidine biosynthetic process"/>
    <property type="evidence" value="ECO:0007669"/>
    <property type="project" value="UniProtKB-KW"/>
</dbReference>
<dbReference type="GO" id="GO:0009086">
    <property type="term" value="P:methionine biosynthetic process"/>
    <property type="evidence" value="ECO:0007669"/>
    <property type="project" value="UniProtKB-KW"/>
</dbReference>
<dbReference type="GO" id="GO:0006164">
    <property type="term" value="P:purine nucleotide biosynthetic process"/>
    <property type="evidence" value="ECO:0007669"/>
    <property type="project" value="UniProtKB-KW"/>
</dbReference>
<dbReference type="GO" id="GO:0035999">
    <property type="term" value="P:tetrahydrofolate interconversion"/>
    <property type="evidence" value="ECO:0007669"/>
    <property type="project" value="UniProtKB-UniRule"/>
</dbReference>
<dbReference type="CDD" id="cd01080">
    <property type="entry name" value="NAD_bind_m-THF_DH_Cyclohyd"/>
    <property type="match status" value="1"/>
</dbReference>
<dbReference type="FunFam" id="3.40.50.720:FF:000094">
    <property type="entry name" value="Bifunctional protein FolD"/>
    <property type="match status" value="1"/>
</dbReference>
<dbReference type="FunFam" id="3.40.50.10860:FF:000005">
    <property type="entry name" value="C-1-tetrahydrofolate synthase, cytoplasmic, putative"/>
    <property type="match status" value="1"/>
</dbReference>
<dbReference type="Gene3D" id="3.40.50.10860">
    <property type="entry name" value="Leucine Dehydrogenase, chain A, domain 1"/>
    <property type="match status" value="1"/>
</dbReference>
<dbReference type="Gene3D" id="3.40.50.720">
    <property type="entry name" value="NAD(P)-binding Rossmann-like Domain"/>
    <property type="match status" value="1"/>
</dbReference>
<dbReference type="HAMAP" id="MF_01576">
    <property type="entry name" value="THF_DHG_CYH"/>
    <property type="match status" value="1"/>
</dbReference>
<dbReference type="InterPro" id="IPR046346">
    <property type="entry name" value="Aminoacid_DH-like_N_sf"/>
</dbReference>
<dbReference type="InterPro" id="IPR036291">
    <property type="entry name" value="NAD(P)-bd_dom_sf"/>
</dbReference>
<dbReference type="InterPro" id="IPR000672">
    <property type="entry name" value="THF_DH/CycHdrlase"/>
</dbReference>
<dbReference type="InterPro" id="IPR020630">
    <property type="entry name" value="THF_DH/CycHdrlase_cat_dom"/>
</dbReference>
<dbReference type="InterPro" id="IPR020631">
    <property type="entry name" value="THF_DH/CycHdrlase_NAD-bd_dom"/>
</dbReference>
<dbReference type="NCBIfam" id="NF010769">
    <property type="entry name" value="PRK14172.1"/>
    <property type="match status" value="1"/>
</dbReference>
<dbReference type="PANTHER" id="PTHR48099:SF5">
    <property type="entry name" value="C-1-TETRAHYDROFOLATE SYNTHASE, CYTOPLASMIC"/>
    <property type="match status" value="1"/>
</dbReference>
<dbReference type="PANTHER" id="PTHR48099">
    <property type="entry name" value="C-1-TETRAHYDROFOLATE SYNTHASE, CYTOPLASMIC-RELATED"/>
    <property type="match status" value="1"/>
</dbReference>
<dbReference type="Pfam" id="PF00763">
    <property type="entry name" value="THF_DHG_CYH"/>
    <property type="match status" value="1"/>
</dbReference>
<dbReference type="Pfam" id="PF02882">
    <property type="entry name" value="THF_DHG_CYH_C"/>
    <property type="match status" value="1"/>
</dbReference>
<dbReference type="PRINTS" id="PR00085">
    <property type="entry name" value="THFDHDRGNASE"/>
</dbReference>
<dbReference type="SUPFAM" id="SSF53223">
    <property type="entry name" value="Aminoacid dehydrogenase-like, N-terminal domain"/>
    <property type="match status" value="1"/>
</dbReference>
<dbReference type="SUPFAM" id="SSF51735">
    <property type="entry name" value="NAD(P)-binding Rossmann-fold domains"/>
    <property type="match status" value="1"/>
</dbReference>
<gene>
    <name evidence="1" type="primary">folD</name>
    <name type="ordered locus">CLL_A2405</name>
</gene>
<organism>
    <name type="scientific">Clostridium botulinum (strain Eklund 17B / Type B)</name>
    <dbReference type="NCBI Taxonomy" id="935198"/>
    <lineage>
        <taxon>Bacteria</taxon>
        <taxon>Bacillati</taxon>
        <taxon>Bacillota</taxon>
        <taxon>Clostridia</taxon>
        <taxon>Eubacteriales</taxon>
        <taxon>Clostridiaceae</taxon>
        <taxon>Clostridium</taxon>
    </lineage>
</organism>
<sequence>MGQIINGKEVALKIKEEIKTFVEERKKNKLRIPKIASILVGNDGGSIYYMSSQEKVANSLGVDFLKIILEENVTDDDVINEIHKLNDDVNVQGIMLQLPLPKHLNEKKIIKEISVKKDIDCLTFESQGKLYMGEKGFLPCTPNSVITLIKSLKIDITGKEVVVLGRSNIVGKPVAQLLLNENATVTICHSKTKDLKEVCSKADILVVAIGKPKFIDEEYIKENAIVIDVGTSSFEGKITGDVNFDKVIDKASFVTPVPGGVGALTTTLLIKNSCEALKEYED</sequence>
<accession>B2TRN5</accession>
<reference key="1">
    <citation type="submission" date="2008-04" db="EMBL/GenBank/DDBJ databases">
        <title>Complete sequence of Clostridium botulinum strain Eklund.</title>
        <authorList>
            <person name="Brinkac L.M."/>
            <person name="Brown J.L."/>
            <person name="Bruce D."/>
            <person name="Detter C."/>
            <person name="Munk C."/>
            <person name="Smith L.A."/>
            <person name="Smith T.J."/>
            <person name="Sutton G."/>
            <person name="Brettin T.S."/>
        </authorList>
    </citation>
    <scope>NUCLEOTIDE SEQUENCE [LARGE SCALE GENOMIC DNA]</scope>
    <source>
        <strain>Eklund 17B / Type B</strain>
    </source>
</reference>
<proteinExistence type="inferred from homology"/>
<comment type="function">
    <text evidence="1">Catalyzes the oxidation of 5,10-methylenetetrahydrofolate to 5,10-methenyltetrahydrofolate and then the hydrolysis of 5,10-methenyltetrahydrofolate to 10-formyltetrahydrofolate.</text>
</comment>
<comment type="catalytic activity">
    <reaction evidence="1">
        <text>(6R)-5,10-methylene-5,6,7,8-tetrahydrofolate + NADP(+) = (6R)-5,10-methenyltetrahydrofolate + NADPH</text>
        <dbReference type="Rhea" id="RHEA:22812"/>
        <dbReference type="ChEBI" id="CHEBI:15636"/>
        <dbReference type="ChEBI" id="CHEBI:57455"/>
        <dbReference type="ChEBI" id="CHEBI:57783"/>
        <dbReference type="ChEBI" id="CHEBI:58349"/>
        <dbReference type="EC" id="1.5.1.5"/>
    </reaction>
</comment>
<comment type="catalytic activity">
    <reaction evidence="1">
        <text>(6R)-5,10-methenyltetrahydrofolate + H2O = (6R)-10-formyltetrahydrofolate + H(+)</text>
        <dbReference type="Rhea" id="RHEA:23700"/>
        <dbReference type="ChEBI" id="CHEBI:15377"/>
        <dbReference type="ChEBI" id="CHEBI:15378"/>
        <dbReference type="ChEBI" id="CHEBI:57455"/>
        <dbReference type="ChEBI" id="CHEBI:195366"/>
        <dbReference type="EC" id="3.5.4.9"/>
    </reaction>
</comment>
<comment type="pathway">
    <text evidence="1">One-carbon metabolism; tetrahydrofolate interconversion.</text>
</comment>
<comment type="subunit">
    <text evidence="1">Homodimer.</text>
</comment>
<comment type="similarity">
    <text evidence="1">Belongs to the tetrahydrofolate dehydrogenase/cyclohydrolase family.</text>
</comment>
<evidence type="ECO:0000255" key="1">
    <source>
        <dbReference type="HAMAP-Rule" id="MF_01576"/>
    </source>
</evidence>